<organism>
    <name type="scientific">Streptococcus agalactiae serotype V (strain ATCC BAA-611 / 2603 V/R)</name>
    <dbReference type="NCBI Taxonomy" id="208435"/>
    <lineage>
        <taxon>Bacteria</taxon>
        <taxon>Bacillati</taxon>
        <taxon>Bacillota</taxon>
        <taxon>Bacilli</taxon>
        <taxon>Lactobacillales</taxon>
        <taxon>Streptococcaceae</taxon>
        <taxon>Streptococcus</taxon>
    </lineage>
</organism>
<gene>
    <name evidence="1" type="primary">rpsN</name>
    <name type="synonym">rpsN2</name>
    <name type="ordered locus">SAG1754</name>
</gene>
<evidence type="ECO:0000255" key="1">
    <source>
        <dbReference type="HAMAP-Rule" id="MF_00537"/>
    </source>
</evidence>
<evidence type="ECO:0000305" key="2"/>
<reference key="1">
    <citation type="journal article" date="2002" name="Proc. Natl. Acad. Sci. U.S.A.">
        <title>Complete genome sequence and comparative genomic analysis of an emerging human pathogen, serotype V Streptococcus agalactiae.</title>
        <authorList>
            <person name="Tettelin H."/>
            <person name="Masignani V."/>
            <person name="Cieslewicz M.J."/>
            <person name="Eisen J.A."/>
            <person name="Peterson S.N."/>
            <person name="Wessels M.R."/>
            <person name="Paulsen I.T."/>
            <person name="Nelson K.E."/>
            <person name="Margarit I."/>
            <person name="Read T.D."/>
            <person name="Madoff L.C."/>
            <person name="Wolf A.M."/>
            <person name="Beanan M.J."/>
            <person name="Brinkac L.M."/>
            <person name="Daugherty S.C."/>
            <person name="DeBoy R.T."/>
            <person name="Durkin A.S."/>
            <person name="Kolonay J.F."/>
            <person name="Madupu R."/>
            <person name="Lewis M.R."/>
            <person name="Radune D."/>
            <person name="Fedorova N.B."/>
            <person name="Scanlan D."/>
            <person name="Khouri H.M."/>
            <person name="Mulligan S."/>
            <person name="Carty H.A."/>
            <person name="Cline R.T."/>
            <person name="Van Aken S.E."/>
            <person name="Gill J."/>
            <person name="Scarselli M."/>
            <person name="Mora M."/>
            <person name="Iacobini E.T."/>
            <person name="Brettoni C."/>
            <person name="Galli G."/>
            <person name="Mariani M."/>
            <person name="Vegni F."/>
            <person name="Maione D."/>
            <person name="Rinaudo D."/>
            <person name="Rappuoli R."/>
            <person name="Telford J.L."/>
            <person name="Kasper D.L."/>
            <person name="Grandi G."/>
            <person name="Fraser C.M."/>
        </authorList>
    </citation>
    <scope>NUCLEOTIDE SEQUENCE [LARGE SCALE GENOMIC DNA]</scope>
    <source>
        <strain>ATCC BAA-611 / 2603 V/R</strain>
    </source>
</reference>
<feature type="chain" id="PRO_0000269069" description="Small ribosomal subunit protein uS14A">
    <location>
        <begin position="1"/>
        <end position="89"/>
    </location>
</feature>
<keyword id="KW-1185">Reference proteome</keyword>
<keyword id="KW-0687">Ribonucleoprotein</keyword>
<keyword id="KW-0689">Ribosomal protein</keyword>
<keyword id="KW-0694">RNA-binding</keyword>
<keyword id="KW-0699">rRNA-binding</keyword>
<accession>Q8DXU2</accession>
<dbReference type="EMBL" id="AE009948">
    <property type="protein sequence ID" value="AAN00617.1"/>
    <property type="molecule type" value="Genomic_DNA"/>
</dbReference>
<dbReference type="RefSeq" id="NP_688744.1">
    <property type="nucleotide sequence ID" value="NC_004116.1"/>
</dbReference>
<dbReference type="RefSeq" id="WP_001085659.1">
    <property type="nucleotide sequence ID" value="NC_004116.1"/>
</dbReference>
<dbReference type="SMR" id="Q8DXU2"/>
<dbReference type="STRING" id="208435.SAG1754"/>
<dbReference type="GeneID" id="66886593"/>
<dbReference type="KEGG" id="sag:SAG1754"/>
<dbReference type="PATRIC" id="fig|208435.3.peg.1761"/>
<dbReference type="HOGENOM" id="CLU_139869_0_0_9"/>
<dbReference type="OrthoDB" id="9810484at2"/>
<dbReference type="Proteomes" id="UP000000821">
    <property type="component" value="Chromosome"/>
</dbReference>
<dbReference type="GO" id="GO:0005737">
    <property type="term" value="C:cytoplasm"/>
    <property type="evidence" value="ECO:0007669"/>
    <property type="project" value="UniProtKB-ARBA"/>
</dbReference>
<dbReference type="GO" id="GO:0015935">
    <property type="term" value="C:small ribosomal subunit"/>
    <property type="evidence" value="ECO:0007669"/>
    <property type="project" value="TreeGrafter"/>
</dbReference>
<dbReference type="GO" id="GO:0019843">
    <property type="term" value="F:rRNA binding"/>
    <property type="evidence" value="ECO:0007669"/>
    <property type="project" value="UniProtKB-UniRule"/>
</dbReference>
<dbReference type="GO" id="GO:0003735">
    <property type="term" value="F:structural constituent of ribosome"/>
    <property type="evidence" value="ECO:0007669"/>
    <property type="project" value="InterPro"/>
</dbReference>
<dbReference type="GO" id="GO:0006412">
    <property type="term" value="P:translation"/>
    <property type="evidence" value="ECO:0007669"/>
    <property type="project" value="UniProtKB-UniRule"/>
</dbReference>
<dbReference type="Gene3D" id="4.10.830.10">
    <property type="entry name" value="30s Ribosomal Protein S14, Chain N"/>
    <property type="match status" value="1"/>
</dbReference>
<dbReference type="HAMAP" id="MF_00537">
    <property type="entry name" value="Ribosomal_uS14_1"/>
    <property type="match status" value="1"/>
</dbReference>
<dbReference type="InterPro" id="IPR001209">
    <property type="entry name" value="Ribosomal_uS14"/>
</dbReference>
<dbReference type="InterPro" id="IPR023036">
    <property type="entry name" value="Ribosomal_uS14_bac/plastid"/>
</dbReference>
<dbReference type="InterPro" id="IPR043140">
    <property type="entry name" value="Ribosomal_uS14_sf"/>
</dbReference>
<dbReference type="NCBIfam" id="NF006477">
    <property type="entry name" value="PRK08881.1"/>
    <property type="match status" value="1"/>
</dbReference>
<dbReference type="PANTHER" id="PTHR19836">
    <property type="entry name" value="30S RIBOSOMAL PROTEIN S14"/>
    <property type="match status" value="1"/>
</dbReference>
<dbReference type="PANTHER" id="PTHR19836:SF19">
    <property type="entry name" value="SMALL RIBOSOMAL SUBUNIT PROTEIN US14M"/>
    <property type="match status" value="1"/>
</dbReference>
<dbReference type="Pfam" id="PF00253">
    <property type="entry name" value="Ribosomal_S14"/>
    <property type="match status" value="1"/>
</dbReference>
<dbReference type="SUPFAM" id="SSF57716">
    <property type="entry name" value="Glucocorticoid receptor-like (DNA-binding domain)"/>
    <property type="match status" value="1"/>
</dbReference>
<sequence>MAKKSKIAKFQKQQKLVEQYAELRRELKEKGDYEALRKLPKDSNPNRLKNRDLIDGRPHAYMRKFGMSRINFRNLAYKGQIPGIKKASW</sequence>
<name>RS14_STRA5</name>
<protein>
    <recommendedName>
        <fullName evidence="1">Small ribosomal subunit protein uS14A</fullName>
    </recommendedName>
    <alternativeName>
        <fullName evidence="2">30S ribosomal protein S14</fullName>
    </alternativeName>
</protein>
<comment type="function">
    <text evidence="1">Binds 16S rRNA, required for the assembly of 30S particles and may also be responsible for determining the conformation of the 16S rRNA at the A site.</text>
</comment>
<comment type="subunit">
    <text evidence="1">Part of the 30S ribosomal subunit. Contacts proteins S3 and S10.</text>
</comment>
<comment type="similarity">
    <text evidence="1">Belongs to the universal ribosomal protein uS14 family.</text>
</comment>
<proteinExistence type="inferred from homology"/>